<proteinExistence type="evidence at transcript level"/>
<gene>
    <name type="primary">ube2i</name>
    <name type="synonym">ubc9</name>
    <name type="synonym">ubce9</name>
    <name type="ORF">TEgg019l14.1</name>
    <name type="ORF">TEgg096h05.1</name>
</gene>
<reference key="1">
    <citation type="submission" date="2006-06" db="EMBL/GenBank/DDBJ databases">
        <authorList>
            <consortium name="Sanger Xenopus tropicalis EST/cDNA project"/>
        </authorList>
    </citation>
    <scope>NUCLEOTIDE SEQUENCE [LARGE SCALE MRNA]</scope>
    <source>
        <tissue>Egg</tissue>
    </source>
</reference>
<evidence type="ECO:0000250" key="1"/>
<evidence type="ECO:0000255" key="2">
    <source>
        <dbReference type="PROSITE-ProRule" id="PRU00388"/>
    </source>
</evidence>
<evidence type="ECO:0000255" key="3">
    <source>
        <dbReference type="PROSITE-ProRule" id="PRU10133"/>
    </source>
</evidence>
<keyword id="KW-0067">ATP-binding</keyword>
<keyword id="KW-0131">Cell cycle</keyword>
<keyword id="KW-0132">Cell division</keyword>
<keyword id="KW-0159">Chromosome partition</keyword>
<keyword id="KW-0498">Mitosis</keyword>
<keyword id="KW-0547">Nucleotide-binding</keyword>
<keyword id="KW-0539">Nucleus</keyword>
<keyword id="KW-1185">Reference proteome</keyword>
<keyword id="KW-0808">Transferase</keyword>
<keyword id="KW-0833">Ubl conjugation pathway</keyword>
<feature type="chain" id="PRO_0000269463" description="SUMO-conjugating enzyme UBC9">
    <location>
        <begin position="1"/>
        <end position="158"/>
    </location>
</feature>
<feature type="domain" description="UBC core" evidence="2">
    <location>
        <begin position="4"/>
        <end position="157"/>
    </location>
</feature>
<feature type="region of interest" description="Interaction with sumo1" evidence="1">
    <location>
        <begin position="13"/>
        <end position="18"/>
    </location>
</feature>
<feature type="active site" description="Glycyl thioester intermediate" evidence="2 3">
    <location>
        <position position="93"/>
    </location>
</feature>
<feature type="site" description="Interaction with ranbp2" evidence="1">
    <location>
        <position position="4"/>
    </location>
</feature>
<feature type="site" description="Interaction with ranbp2" evidence="1">
    <location>
        <position position="25"/>
    </location>
</feature>
<feature type="site" description="Interaction with ranbp2" evidence="1">
    <location>
        <position position="57"/>
    </location>
</feature>
<feature type="site" description="Substrate binding" evidence="1">
    <location>
        <begin position="100"/>
        <end position="101"/>
    </location>
</feature>
<accession>Q28CQ4</accession>
<dbReference type="EC" id="2.3.2.-"/>
<dbReference type="EMBL" id="CR761123">
    <property type="protein sequence ID" value="CAJ81669.1"/>
    <property type="molecule type" value="mRNA"/>
</dbReference>
<dbReference type="EMBL" id="CR926257">
    <property type="protein sequence ID" value="CAJ81434.1"/>
    <property type="molecule type" value="mRNA"/>
</dbReference>
<dbReference type="RefSeq" id="NP_001016408.1">
    <property type="nucleotide sequence ID" value="NM_001016408.2"/>
</dbReference>
<dbReference type="RefSeq" id="XP_012825871.1">
    <property type="nucleotide sequence ID" value="XM_012970417.3"/>
</dbReference>
<dbReference type="RefSeq" id="XP_012825872.1">
    <property type="nucleotide sequence ID" value="XM_012970418.3"/>
</dbReference>
<dbReference type="RefSeq" id="XP_012825873.1">
    <property type="nucleotide sequence ID" value="XM_012970419.3"/>
</dbReference>
<dbReference type="SMR" id="Q28CQ4"/>
<dbReference type="FunCoup" id="Q28CQ4">
    <property type="interactions" value="3567"/>
</dbReference>
<dbReference type="STRING" id="8364.ENSXETP00000044743"/>
<dbReference type="PaxDb" id="8364-ENSXETP00000054232"/>
<dbReference type="GeneID" id="549162"/>
<dbReference type="KEGG" id="xtr:549162"/>
<dbReference type="AGR" id="Xenbase:XB-GENE-974017"/>
<dbReference type="CTD" id="7329"/>
<dbReference type="Xenbase" id="XB-GENE-974017">
    <property type="gene designation" value="ube2i"/>
</dbReference>
<dbReference type="eggNOG" id="KOG0424">
    <property type="taxonomic scope" value="Eukaryota"/>
</dbReference>
<dbReference type="HOGENOM" id="CLU_030988_12_0_1"/>
<dbReference type="InParanoid" id="Q28CQ4"/>
<dbReference type="OMA" id="TWECGIP"/>
<dbReference type="OrthoDB" id="6600758at2759"/>
<dbReference type="PhylomeDB" id="Q28CQ4"/>
<dbReference type="Reactome" id="R-XTR-196791">
    <property type="pathway name" value="Vitamin D (calciferol) metabolism"/>
</dbReference>
<dbReference type="Reactome" id="R-XTR-3065678">
    <property type="pathway name" value="SUMO is transferred from E1 to E2 (UBE2I, UBC9)"/>
</dbReference>
<dbReference type="Reactome" id="R-XTR-3108214">
    <property type="pathway name" value="SUMOylation of DNA damage response and repair proteins"/>
</dbReference>
<dbReference type="Reactome" id="R-XTR-3232118">
    <property type="pathway name" value="SUMOylation of transcription factors"/>
</dbReference>
<dbReference type="Reactome" id="R-XTR-3232142">
    <property type="pathway name" value="SUMOylation of ubiquitinylation proteins"/>
</dbReference>
<dbReference type="Reactome" id="R-XTR-3899300">
    <property type="pathway name" value="SUMOylation of transcription cofactors"/>
</dbReference>
<dbReference type="Reactome" id="R-XTR-4085377">
    <property type="pathway name" value="SUMOylation of SUMOylation proteins"/>
</dbReference>
<dbReference type="Reactome" id="R-XTR-4090294">
    <property type="pathway name" value="SUMOylation of intracellular receptors"/>
</dbReference>
<dbReference type="Reactome" id="R-XTR-4551638">
    <property type="pathway name" value="SUMOylation of chromatin organization proteins"/>
</dbReference>
<dbReference type="Reactome" id="R-XTR-4570464">
    <property type="pathway name" value="SUMOylation of RNA binding proteins"/>
</dbReference>
<dbReference type="Reactome" id="R-XTR-4615885">
    <property type="pathway name" value="SUMOylation of DNA replication proteins"/>
</dbReference>
<dbReference type="Reactome" id="R-XTR-4655427">
    <property type="pathway name" value="SUMOylation of DNA methylation proteins"/>
</dbReference>
<dbReference type="Reactome" id="R-XTR-4755510">
    <property type="pathway name" value="SUMOylation of immune response proteins"/>
</dbReference>
<dbReference type="Reactome" id="R-XTR-8866904">
    <property type="pathway name" value="Negative regulation of activity of TFAP2 (AP-2) family transcription factors"/>
</dbReference>
<dbReference type="Reactome" id="R-XTR-9615933">
    <property type="pathway name" value="Postmitotic nuclear pore complex (NPC) reformation"/>
</dbReference>
<dbReference type="Reactome" id="R-XTR-9793242">
    <property type="pathway name" value="SUMOylation of nuclear envelope proteins"/>
</dbReference>
<dbReference type="Reactome" id="R-XTR-9856649">
    <property type="pathway name" value="Transcriptional and post-translational regulation of MITF-M expression and activity"/>
</dbReference>
<dbReference type="UniPathway" id="UPA00886"/>
<dbReference type="Proteomes" id="UP000008143">
    <property type="component" value="Chromosome 9"/>
</dbReference>
<dbReference type="Bgee" id="ENSXETG00000004027">
    <property type="expression patterns" value="Expressed in ovary and 15 other cell types or tissues"/>
</dbReference>
<dbReference type="GO" id="GO:0005634">
    <property type="term" value="C:nucleus"/>
    <property type="evidence" value="ECO:0007669"/>
    <property type="project" value="UniProtKB-SubCell"/>
</dbReference>
<dbReference type="GO" id="GO:0005524">
    <property type="term" value="F:ATP binding"/>
    <property type="evidence" value="ECO:0007669"/>
    <property type="project" value="UniProtKB-KW"/>
</dbReference>
<dbReference type="GO" id="GO:0016740">
    <property type="term" value="F:transferase activity"/>
    <property type="evidence" value="ECO:0007669"/>
    <property type="project" value="UniProtKB-KW"/>
</dbReference>
<dbReference type="GO" id="GO:0051301">
    <property type="term" value="P:cell division"/>
    <property type="evidence" value="ECO:0007669"/>
    <property type="project" value="UniProtKB-KW"/>
</dbReference>
<dbReference type="GO" id="GO:0007059">
    <property type="term" value="P:chromosome segregation"/>
    <property type="evidence" value="ECO:0007669"/>
    <property type="project" value="UniProtKB-KW"/>
</dbReference>
<dbReference type="GO" id="GO:0016925">
    <property type="term" value="P:protein sumoylation"/>
    <property type="evidence" value="ECO:0007669"/>
    <property type="project" value="UniProtKB-UniPathway"/>
</dbReference>
<dbReference type="CDD" id="cd23798">
    <property type="entry name" value="UBCc_UBE2I"/>
    <property type="match status" value="1"/>
</dbReference>
<dbReference type="FunFam" id="3.10.110.10:FF:000013">
    <property type="entry name" value="SUMO-conjugating enzyme UBC9"/>
    <property type="match status" value="1"/>
</dbReference>
<dbReference type="Gene3D" id="3.10.110.10">
    <property type="entry name" value="Ubiquitin Conjugating Enzyme"/>
    <property type="match status" value="1"/>
</dbReference>
<dbReference type="InterPro" id="IPR050113">
    <property type="entry name" value="Ub_conjugating_enzyme"/>
</dbReference>
<dbReference type="InterPro" id="IPR000608">
    <property type="entry name" value="UBQ-conjugat_E2_core"/>
</dbReference>
<dbReference type="InterPro" id="IPR023313">
    <property type="entry name" value="UBQ-conjugating_AS"/>
</dbReference>
<dbReference type="InterPro" id="IPR016135">
    <property type="entry name" value="UBQ-conjugating_enzyme/RWD"/>
</dbReference>
<dbReference type="PANTHER" id="PTHR24067">
    <property type="entry name" value="UBIQUITIN-CONJUGATING ENZYME E2"/>
    <property type="match status" value="1"/>
</dbReference>
<dbReference type="Pfam" id="PF00179">
    <property type="entry name" value="UQ_con"/>
    <property type="match status" value="1"/>
</dbReference>
<dbReference type="SMART" id="SM00212">
    <property type="entry name" value="UBCc"/>
    <property type="match status" value="1"/>
</dbReference>
<dbReference type="SUPFAM" id="SSF54495">
    <property type="entry name" value="UBC-like"/>
    <property type="match status" value="1"/>
</dbReference>
<dbReference type="PROSITE" id="PS00183">
    <property type="entry name" value="UBC_1"/>
    <property type="match status" value="1"/>
</dbReference>
<dbReference type="PROSITE" id="PS50127">
    <property type="entry name" value="UBC_2"/>
    <property type="match status" value="1"/>
</dbReference>
<sequence>MSGIALSRLAQERKAWRKDHPFGFVAVPTKNPDGTMNLMNWECAIPGKKGTPWEGGLFKLRMLFKDDYPSSPPKCKFEPPLFHPNVYPSGTVCLSILEEDKDWRPAITIKQILLGIQELLNEPNIQDPAQAEAYTIYCQNRVEYEKRVRAQAKKFAPS</sequence>
<protein>
    <recommendedName>
        <fullName>SUMO-conjugating enzyme UBC9</fullName>
        <ecNumber>2.3.2.-</ecNumber>
    </recommendedName>
    <alternativeName>
        <fullName>RING-type E3 SUMO transferase UBC9</fullName>
    </alternativeName>
    <alternativeName>
        <fullName>SUMO-protein ligase</fullName>
    </alternativeName>
    <alternativeName>
        <fullName>Ubiquitin carrier protein 9</fullName>
    </alternativeName>
    <alternativeName>
        <fullName>Ubiquitin carrier protein I</fullName>
    </alternativeName>
    <alternativeName>
        <fullName>Ubiquitin-conjugating enzyme E2 I</fullName>
    </alternativeName>
    <alternativeName>
        <fullName>Ubiquitin-protein ligase I</fullName>
    </alternativeName>
</protein>
<name>UBC9_XENTR</name>
<comment type="function">
    <text evidence="1">Accepts the ubiquitin-like proteins sumo1, sumo2 and sumo3 from the uble1a-uble1b E1 complex and catalyzes their covalent attachment to other proteins with the help of an E3 ligase such as ranbp2 or cbx4. Essential for nuclear architecture and chromosome segregation.</text>
</comment>
<comment type="pathway">
    <text>Protein modification; protein sumoylation.</text>
</comment>
<comment type="subunit">
    <text evidence="1">Forms a tight complex with rangap1 and ranbp2. Interacts with sox9 and sox10 (By similarity).</text>
</comment>
<comment type="subcellular location">
    <subcellularLocation>
        <location evidence="1">Nucleus</location>
    </subcellularLocation>
</comment>
<comment type="similarity">
    <text evidence="2">Belongs to the ubiquitin-conjugating enzyme family.</text>
</comment>
<organism>
    <name type="scientific">Xenopus tropicalis</name>
    <name type="common">Western clawed frog</name>
    <name type="synonym">Silurana tropicalis</name>
    <dbReference type="NCBI Taxonomy" id="8364"/>
    <lineage>
        <taxon>Eukaryota</taxon>
        <taxon>Metazoa</taxon>
        <taxon>Chordata</taxon>
        <taxon>Craniata</taxon>
        <taxon>Vertebrata</taxon>
        <taxon>Euteleostomi</taxon>
        <taxon>Amphibia</taxon>
        <taxon>Batrachia</taxon>
        <taxon>Anura</taxon>
        <taxon>Pipoidea</taxon>
        <taxon>Pipidae</taxon>
        <taxon>Xenopodinae</taxon>
        <taxon>Xenopus</taxon>
        <taxon>Silurana</taxon>
    </lineage>
</organism>